<gene>
    <name type="ORF">AFUB_078980</name>
</gene>
<reference key="1">
    <citation type="journal article" date="2008" name="PLoS Genet.">
        <title>Genomic islands in the pathogenic filamentous fungus Aspergillus fumigatus.</title>
        <authorList>
            <person name="Fedorova N.D."/>
            <person name="Khaldi N."/>
            <person name="Joardar V.S."/>
            <person name="Maiti R."/>
            <person name="Amedeo P."/>
            <person name="Anderson M.J."/>
            <person name="Crabtree J."/>
            <person name="Silva J.C."/>
            <person name="Badger J.H."/>
            <person name="Albarraq A."/>
            <person name="Angiuoli S."/>
            <person name="Bussey H."/>
            <person name="Bowyer P."/>
            <person name="Cotty P.J."/>
            <person name="Dyer P.S."/>
            <person name="Egan A."/>
            <person name="Galens K."/>
            <person name="Fraser-Liggett C.M."/>
            <person name="Haas B.J."/>
            <person name="Inman J.M."/>
            <person name="Kent R."/>
            <person name="Lemieux S."/>
            <person name="Malavazi I."/>
            <person name="Orvis J."/>
            <person name="Roemer T."/>
            <person name="Ronning C.M."/>
            <person name="Sundaram J.P."/>
            <person name="Sutton G."/>
            <person name="Turner G."/>
            <person name="Venter J.C."/>
            <person name="White O.R."/>
            <person name="Whitty B.R."/>
            <person name="Youngman P."/>
            <person name="Wolfe K.H."/>
            <person name="Goldman G.H."/>
            <person name="Wortman J.R."/>
            <person name="Jiang B."/>
            <person name="Denning D.W."/>
            <person name="Nierman W.C."/>
        </authorList>
    </citation>
    <scope>NUCLEOTIDE SEQUENCE [LARGE SCALE GENOMIC DNA]</scope>
    <source>
        <strain>CBS 144.89 / FGSC A1163 / CEA10</strain>
    </source>
</reference>
<reference key="2">
    <citation type="journal article" date="2019" name="Nat. Microbiol.">
        <title>Fungal biofilm morphology impacts hypoxia fitness and disease progression.</title>
        <authorList>
            <person name="Kowalski C.H."/>
            <person name="Kerkaert J.D."/>
            <person name="Liu K.W."/>
            <person name="Bond M.C."/>
            <person name="Hartmann R."/>
            <person name="Nadell C.D."/>
            <person name="Stajich J.E."/>
            <person name="Cramer R.A."/>
        </authorList>
    </citation>
    <scope>FUNCTION</scope>
    <scope>INDUCTION</scope>
</reference>
<name>HAC2_ASPFC</name>
<evidence type="ECO:0000255" key="1">
    <source>
        <dbReference type="PROSITE-ProRule" id="PRU00159"/>
    </source>
</evidence>
<evidence type="ECO:0000269" key="2">
    <source>
    </source>
</evidence>
<evidence type="ECO:0000303" key="3">
    <source>
    </source>
</evidence>
<evidence type="ECO:0000305" key="4"/>
<evidence type="ECO:0000305" key="5">
    <source>
    </source>
</evidence>
<dbReference type="EC" id="2.7.11.1" evidence="5"/>
<dbReference type="EMBL" id="DS499599">
    <property type="protein sequence ID" value="EDP49865.1"/>
    <property type="molecule type" value="Genomic_DNA"/>
</dbReference>
<dbReference type="SMR" id="B0Y8Y4"/>
<dbReference type="EnsemblFungi" id="EDP49865">
    <property type="protein sequence ID" value="EDP49865"/>
    <property type="gene ID" value="AFUB_078980"/>
</dbReference>
<dbReference type="VEuPathDB" id="FungiDB:AFUB_078980"/>
<dbReference type="HOGENOM" id="CLU_000288_81_1_1"/>
<dbReference type="OrthoDB" id="77185at5052"/>
<dbReference type="PhylomeDB" id="B0Y8Y4"/>
<dbReference type="Proteomes" id="UP000001699">
    <property type="component" value="Unassembled WGS sequence"/>
</dbReference>
<dbReference type="GO" id="GO:0005737">
    <property type="term" value="C:cytoplasm"/>
    <property type="evidence" value="ECO:0007669"/>
    <property type="project" value="TreeGrafter"/>
</dbReference>
<dbReference type="GO" id="GO:0005634">
    <property type="term" value="C:nucleus"/>
    <property type="evidence" value="ECO:0007669"/>
    <property type="project" value="TreeGrafter"/>
</dbReference>
<dbReference type="GO" id="GO:0005524">
    <property type="term" value="F:ATP binding"/>
    <property type="evidence" value="ECO:0007669"/>
    <property type="project" value="UniProtKB-KW"/>
</dbReference>
<dbReference type="GO" id="GO:0004674">
    <property type="term" value="F:protein serine/threonine kinase activity"/>
    <property type="evidence" value="ECO:0007669"/>
    <property type="project" value="UniProtKB-KW"/>
</dbReference>
<dbReference type="GO" id="GO:0007155">
    <property type="term" value="P:cell adhesion"/>
    <property type="evidence" value="ECO:0007669"/>
    <property type="project" value="UniProtKB-KW"/>
</dbReference>
<dbReference type="GO" id="GO:0050684">
    <property type="term" value="P:regulation of mRNA processing"/>
    <property type="evidence" value="ECO:0007669"/>
    <property type="project" value="TreeGrafter"/>
</dbReference>
<dbReference type="GO" id="GO:0000245">
    <property type="term" value="P:spliceosomal complex assembly"/>
    <property type="evidence" value="ECO:0007669"/>
    <property type="project" value="TreeGrafter"/>
</dbReference>
<dbReference type="Gene3D" id="3.30.200.20">
    <property type="entry name" value="Phosphorylase Kinase, domain 1"/>
    <property type="match status" value="1"/>
</dbReference>
<dbReference type="Gene3D" id="1.10.510.10">
    <property type="entry name" value="Transferase(Phosphotransferase) domain 1"/>
    <property type="match status" value="1"/>
</dbReference>
<dbReference type="InterPro" id="IPR011009">
    <property type="entry name" value="Kinase-like_dom_sf"/>
</dbReference>
<dbReference type="InterPro" id="IPR000719">
    <property type="entry name" value="Prot_kinase_dom"/>
</dbReference>
<dbReference type="InterPro" id="IPR017441">
    <property type="entry name" value="Protein_kinase_ATP_BS"/>
</dbReference>
<dbReference type="InterPro" id="IPR051334">
    <property type="entry name" value="SRPK"/>
</dbReference>
<dbReference type="PANTHER" id="PTHR47634">
    <property type="entry name" value="PROTEIN KINASE DOMAIN-CONTAINING PROTEIN-RELATED"/>
    <property type="match status" value="1"/>
</dbReference>
<dbReference type="PANTHER" id="PTHR47634:SF9">
    <property type="entry name" value="PROTEIN KINASE DOMAIN-CONTAINING PROTEIN-RELATED"/>
    <property type="match status" value="1"/>
</dbReference>
<dbReference type="Pfam" id="PF00069">
    <property type="entry name" value="Pkinase"/>
    <property type="match status" value="2"/>
</dbReference>
<dbReference type="SMART" id="SM00220">
    <property type="entry name" value="S_TKc"/>
    <property type="match status" value="1"/>
</dbReference>
<dbReference type="SUPFAM" id="SSF56112">
    <property type="entry name" value="Protein kinase-like (PK-like)"/>
    <property type="match status" value="1"/>
</dbReference>
<dbReference type="PROSITE" id="PS00107">
    <property type="entry name" value="PROTEIN_KINASE_ATP"/>
    <property type="match status" value="1"/>
</dbReference>
<dbReference type="PROSITE" id="PS50011">
    <property type="entry name" value="PROTEIN_KINASE_DOM"/>
    <property type="match status" value="1"/>
</dbReference>
<sequence>MTPFHRLSRFFRQAPSPPRTPITSNFPILDSAVKIEEERMPAFDRGLFYPVKLGDVFRSRYQVLSKLGFGANSTVWFCRDLHQHRYIALKIYIRSSEVNREVQVLKHLSSVKTNHPGSSLVRKMIEEFEITGPSGSHQCIVYEPLLTSLLHFQATLKPQSLPEDLLKGALQQLLLALDYLHSEAHVIHTDDSIFREWDTSEEAEPSPRKVDSSHTIYKSRPFHRKKGWSGFGMPLLSDFGEARLGDVHDGSIQPDIYRAPEVILGMSWTSKVDIWNVGALIWDLFEDHHLFDGRGPNGDHSDAHLLAEMIAMLGPAPLNFLRKAPQSRKYWDSNGRWKGAIEVPQCSLEDSEEYLEGENKKMFMQFVRKMLRWDPEERQSAPELLTDPWLIAQ</sequence>
<feature type="chain" id="PRO_0000460410" description="Serine/threonine protein kinase AFUB_078980">
    <location>
        <begin position="1"/>
        <end position="393"/>
    </location>
</feature>
<feature type="domain" description="Protein kinase" evidence="1">
    <location>
        <begin position="61"/>
        <end position="390"/>
    </location>
</feature>
<feature type="active site" description="Proton acceptor" evidence="1">
    <location>
        <position position="190"/>
    </location>
</feature>
<feature type="binding site" evidence="1">
    <location>
        <begin position="67"/>
        <end position="75"/>
    </location>
    <ligand>
        <name>ATP</name>
        <dbReference type="ChEBI" id="CHEBI:30616"/>
    </ligand>
</feature>
<feature type="binding site" evidence="1">
    <location>
        <position position="90"/>
    </location>
    <ligand>
        <name>ATP</name>
        <dbReference type="ChEBI" id="CHEBI:30616"/>
    </ligand>
</feature>
<accession>B0Y8Y4</accession>
<keyword id="KW-0067">ATP-binding</keyword>
<keyword id="KW-0130">Cell adhesion</keyword>
<keyword id="KW-0418">Kinase</keyword>
<keyword id="KW-0547">Nucleotide-binding</keyword>
<keyword id="KW-0723">Serine/threonine-protein kinase</keyword>
<keyword id="KW-0808">Transferase</keyword>
<keyword id="KW-0843">Virulence</keyword>
<organism>
    <name type="scientific">Aspergillus fumigatus (strain CBS 144.89 / FGSC A1163 / CEA10)</name>
    <name type="common">Neosartorya fumigata</name>
    <dbReference type="NCBI Taxonomy" id="451804"/>
    <lineage>
        <taxon>Eukaryota</taxon>
        <taxon>Fungi</taxon>
        <taxon>Dikarya</taxon>
        <taxon>Ascomycota</taxon>
        <taxon>Pezizomycotina</taxon>
        <taxon>Eurotiomycetes</taxon>
        <taxon>Eurotiomycetidae</taxon>
        <taxon>Eurotiales</taxon>
        <taxon>Aspergillaceae</taxon>
        <taxon>Aspergillus</taxon>
        <taxon>Aspergillus subgen. Fumigati</taxon>
    </lineage>
</organism>
<protein>
    <recommendedName>
        <fullName evidence="3">Serine/threonine protein kinase AFUB_078980</fullName>
        <ecNumber evidence="5">2.7.11.1</ecNumber>
    </recommendedName>
    <alternativeName>
        <fullName evidence="3">Subtelomeric hrmA-associated cluster protein AFUB_078980</fullName>
    </alternativeName>
</protein>
<comment type="function">
    <text evidence="2">Serine/threonine protein kinase; part of the subtelomeric hrmA-associated cluster (HAC) containing genes that alter the hyphal surface (such as reduced total chitin or increased beta-glucan exposure) and perturb inter-hyphal interactions within the developing biofilms, resulting in a loss of vertically aligned polarized growing filaments (PubMed:31548684). Consequently, this hypoxia-typic morphotype (called H-MORPH) with altered biofilm architecture leads to increased hypoxia fitness, increased host inflammation, rapid disease progression, and mortality in a murine model of invasive aspergillosis (PubMed:31548684).</text>
</comment>
<comment type="catalytic activity">
    <reaction evidence="4">
        <text>L-seryl-[protein] + ATP = O-phospho-L-seryl-[protein] + ADP + H(+)</text>
        <dbReference type="Rhea" id="RHEA:17989"/>
        <dbReference type="Rhea" id="RHEA-COMP:9863"/>
        <dbReference type="Rhea" id="RHEA-COMP:11604"/>
        <dbReference type="ChEBI" id="CHEBI:15378"/>
        <dbReference type="ChEBI" id="CHEBI:29999"/>
        <dbReference type="ChEBI" id="CHEBI:30616"/>
        <dbReference type="ChEBI" id="CHEBI:83421"/>
        <dbReference type="ChEBI" id="CHEBI:456216"/>
        <dbReference type="EC" id="2.7.11.1"/>
    </reaction>
</comment>
<comment type="catalytic activity">
    <reaction evidence="4">
        <text>L-threonyl-[protein] + ATP = O-phospho-L-threonyl-[protein] + ADP + H(+)</text>
        <dbReference type="Rhea" id="RHEA:46608"/>
        <dbReference type="Rhea" id="RHEA-COMP:11060"/>
        <dbReference type="Rhea" id="RHEA-COMP:11605"/>
        <dbReference type="ChEBI" id="CHEBI:15378"/>
        <dbReference type="ChEBI" id="CHEBI:30013"/>
        <dbReference type="ChEBI" id="CHEBI:30616"/>
        <dbReference type="ChEBI" id="CHEBI:61977"/>
        <dbReference type="ChEBI" id="CHEBI:456216"/>
        <dbReference type="EC" id="2.7.11.1"/>
    </reaction>
</comment>
<comment type="induction">
    <text evidence="2">Expression is regulated by the hypoxia responsive morphology factor A (hrmA).</text>
</comment>
<comment type="similarity">
    <text evidence="4">Belongs to the protein kinase superfamily. CMGC Ser/Thr protein kinase family.</text>
</comment>
<proteinExistence type="evidence at transcript level"/>